<accession>P59419</accession>
<protein>
    <recommendedName>
        <fullName evidence="1">UDP-N-acetylmuramoyl-L-alanyl-D-glutamate--2,6-diaminopimelate ligase</fullName>
        <ecNumber evidence="1">6.3.2.13</ecNumber>
    </recommendedName>
    <alternativeName>
        <fullName evidence="1">Meso-A2pm-adding enzyme</fullName>
    </alternativeName>
    <alternativeName>
        <fullName evidence="1">Meso-diaminopimelate-adding enzyme</fullName>
    </alternativeName>
    <alternativeName>
        <fullName evidence="1">UDP-MurNAc-L-Ala-D-Glu:meso-diaminopimelate ligase</fullName>
    </alternativeName>
    <alternativeName>
        <fullName evidence="1">UDP-MurNAc-tripeptide synthetase</fullName>
    </alternativeName>
    <alternativeName>
        <fullName evidence="1">UDP-N-acetylmuramyl-tripeptide synthetase</fullName>
    </alternativeName>
</protein>
<comment type="function">
    <text evidence="1">Catalyzes the addition of meso-diaminopimelic acid to the nucleotide precursor UDP-N-acetylmuramoyl-L-alanyl-D-glutamate (UMAG) in the biosynthesis of bacterial cell-wall peptidoglycan.</text>
</comment>
<comment type="catalytic activity">
    <reaction evidence="1">
        <text>UDP-N-acetyl-alpha-D-muramoyl-L-alanyl-D-glutamate + meso-2,6-diaminopimelate + ATP = UDP-N-acetyl-alpha-D-muramoyl-L-alanyl-gamma-D-glutamyl-meso-2,6-diaminopimelate + ADP + phosphate + H(+)</text>
        <dbReference type="Rhea" id="RHEA:23676"/>
        <dbReference type="ChEBI" id="CHEBI:15378"/>
        <dbReference type="ChEBI" id="CHEBI:30616"/>
        <dbReference type="ChEBI" id="CHEBI:43474"/>
        <dbReference type="ChEBI" id="CHEBI:57791"/>
        <dbReference type="ChEBI" id="CHEBI:83900"/>
        <dbReference type="ChEBI" id="CHEBI:83905"/>
        <dbReference type="ChEBI" id="CHEBI:456216"/>
        <dbReference type="EC" id="6.3.2.13"/>
    </reaction>
</comment>
<comment type="cofactor">
    <cofactor evidence="1">
        <name>Mg(2+)</name>
        <dbReference type="ChEBI" id="CHEBI:18420"/>
    </cofactor>
</comment>
<comment type="pathway">
    <text evidence="1">Cell wall biogenesis; peptidoglycan biosynthesis.</text>
</comment>
<comment type="subcellular location">
    <subcellularLocation>
        <location evidence="1">Cytoplasm</location>
    </subcellularLocation>
</comment>
<comment type="PTM">
    <text evidence="1">Carboxylation is probably crucial for Mg(2+) binding and, consequently, for the gamma-phosphate positioning of ATP.</text>
</comment>
<comment type="similarity">
    <text evidence="1">Belongs to the MurCDEF family. MurE subfamily.</text>
</comment>
<keyword id="KW-0067">ATP-binding</keyword>
<keyword id="KW-0131">Cell cycle</keyword>
<keyword id="KW-0132">Cell division</keyword>
<keyword id="KW-0133">Cell shape</keyword>
<keyword id="KW-0961">Cell wall biogenesis/degradation</keyword>
<keyword id="KW-0963">Cytoplasm</keyword>
<keyword id="KW-0436">Ligase</keyword>
<keyword id="KW-0460">Magnesium</keyword>
<keyword id="KW-0547">Nucleotide-binding</keyword>
<keyword id="KW-0573">Peptidoglycan synthesis</keyword>
<keyword id="KW-1185">Reference proteome</keyword>
<gene>
    <name evidence="1" type="primary">murE</name>
    <name type="ordered locus">bbp_203</name>
</gene>
<organism>
    <name type="scientific">Buchnera aphidicola subsp. Baizongia pistaciae (strain Bp)</name>
    <dbReference type="NCBI Taxonomy" id="224915"/>
    <lineage>
        <taxon>Bacteria</taxon>
        <taxon>Pseudomonadati</taxon>
        <taxon>Pseudomonadota</taxon>
        <taxon>Gammaproteobacteria</taxon>
        <taxon>Enterobacterales</taxon>
        <taxon>Erwiniaceae</taxon>
        <taxon>Buchnera</taxon>
    </lineage>
</organism>
<feature type="chain" id="PRO_0000101875" description="UDP-N-acetylmuramoyl-L-alanyl-D-glutamate--2,6-diaminopimelate ligase">
    <location>
        <begin position="1"/>
        <end position="508"/>
    </location>
</feature>
<feature type="short sequence motif" description="Meso-diaminopimelate recognition motif">
    <location>
        <begin position="423"/>
        <end position="426"/>
    </location>
</feature>
<feature type="binding site" evidence="1">
    <location>
        <position position="33"/>
    </location>
    <ligand>
        <name>UDP-N-acetyl-alpha-D-muramoyl-L-alanyl-D-glutamate</name>
        <dbReference type="ChEBI" id="CHEBI:83900"/>
    </ligand>
</feature>
<feature type="binding site" evidence="1">
    <location>
        <begin position="121"/>
        <end position="127"/>
    </location>
    <ligand>
        <name>ATP</name>
        <dbReference type="ChEBI" id="CHEBI:30616"/>
    </ligand>
</feature>
<feature type="binding site" evidence="1">
    <location>
        <position position="162"/>
    </location>
    <ligand>
        <name>UDP-N-acetyl-alpha-D-muramoyl-L-alanyl-D-glutamate</name>
        <dbReference type="ChEBI" id="CHEBI:83900"/>
    </ligand>
</feature>
<feature type="binding site" evidence="1">
    <location>
        <begin position="163"/>
        <end position="164"/>
    </location>
    <ligand>
        <name>UDP-N-acetyl-alpha-D-muramoyl-L-alanyl-D-glutamate</name>
        <dbReference type="ChEBI" id="CHEBI:83900"/>
    </ligand>
</feature>
<feature type="binding site" evidence="1">
    <location>
        <position position="190"/>
    </location>
    <ligand>
        <name>UDP-N-acetyl-alpha-D-muramoyl-L-alanyl-D-glutamate</name>
        <dbReference type="ChEBI" id="CHEBI:83900"/>
    </ligand>
</feature>
<feature type="binding site" evidence="1">
    <location>
        <position position="196"/>
    </location>
    <ligand>
        <name>UDP-N-acetyl-alpha-D-muramoyl-L-alanyl-D-glutamate</name>
        <dbReference type="ChEBI" id="CHEBI:83900"/>
    </ligand>
</feature>
<feature type="binding site" evidence="1">
    <location>
        <position position="198"/>
    </location>
    <ligand>
        <name>UDP-N-acetyl-alpha-D-muramoyl-L-alanyl-D-glutamate</name>
        <dbReference type="ChEBI" id="CHEBI:83900"/>
    </ligand>
</feature>
<feature type="binding site" evidence="1">
    <location>
        <position position="399"/>
    </location>
    <ligand>
        <name>meso-2,6-diaminopimelate</name>
        <dbReference type="ChEBI" id="CHEBI:57791"/>
    </ligand>
</feature>
<feature type="binding site" evidence="1">
    <location>
        <begin position="423"/>
        <end position="426"/>
    </location>
    <ligand>
        <name>meso-2,6-diaminopimelate</name>
        <dbReference type="ChEBI" id="CHEBI:57791"/>
    </ligand>
</feature>
<feature type="binding site" evidence="1">
    <location>
        <position position="474"/>
    </location>
    <ligand>
        <name>meso-2,6-diaminopimelate</name>
        <dbReference type="ChEBI" id="CHEBI:57791"/>
    </ligand>
</feature>
<feature type="binding site" evidence="1">
    <location>
        <position position="478"/>
    </location>
    <ligand>
        <name>meso-2,6-diaminopimelate</name>
        <dbReference type="ChEBI" id="CHEBI:57791"/>
    </ligand>
</feature>
<feature type="modified residue" description="N6-carboxylysine" evidence="1">
    <location>
        <position position="230"/>
    </location>
</feature>
<proteinExistence type="inferred from homology"/>
<evidence type="ECO:0000255" key="1">
    <source>
        <dbReference type="HAMAP-Rule" id="MF_00208"/>
    </source>
</evidence>
<name>MURE_BUCBP</name>
<dbReference type="EC" id="6.3.2.13" evidence="1"/>
<dbReference type="EMBL" id="AE016826">
    <property type="protein sequence ID" value="AAO26935.1"/>
    <property type="molecule type" value="Genomic_DNA"/>
</dbReference>
<dbReference type="RefSeq" id="WP_011091336.1">
    <property type="nucleotide sequence ID" value="NC_004545.1"/>
</dbReference>
<dbReference type="SMR" id="P59419"/>
<dbReference type="STRING" id="224915.bbp_203"/>
<dbReference type="KEGG" id="bab:bbp_203"/>
<dbReference type="eggNOG" id="COG0769">
    <property type="taxonomic scope" value="Bacteria"/>
</dbReference>
<dbReference type="HOGENOM" id="CLU_022291_3_2_6"/>
<dbReference type="OrthoDB" id="9800958at2"/>
<dbReference type="UniPathway" id="UPA00219"/>
<dbReference type="Proteomes" id="UP000000601">
    <property type="component" value="Chromosome"/>
</dbReference>
<dbReference type="GO" id="GO:0005737">
    <property type="term" value="C:cytoplasm"/>
    <property type="evidence" value="ECO:0007669"/>
    <property type="project" value="UniProtKB-SubCell"/>
</dbReference>
<dbReference type="GO" id="GO:0005524">
    <property type="term" value="F:ATP binding"/>
    <property type="evidence" value="ECO:0007669"/>
    <property type="project" value="UniProtKB-UniRule"/>
</dbReference>
<dbReference type="GO" id="GO:0000287">
    <property type="term" value="F:magnesium ion binding"/>
    <property type="evidence" value="ECO:0007669"/>
    <property type="project" value="UniProtKB-UniRule"/>
</dbReference>
<dbReference type="GO" id="GO:0008765">
    <property type="term" value="F:UDP-N-acetylmuramoylalanyl-D-glutamate-2,6-diaminopimelate ligase activity"/>
    <property type="evidence" value="ECO:0007669"/>
    <property type="project" value="UniProtKB-UniRule"/>
</dbReference>
<dbReference type="GO" id="GO:0051301">
    <property type="term" value="P:cell division"/>
    <property type="evidence" value="ECO:0007669"/>
    <property type="project" value="UniProtKB-KW"/>
</dbReference>
<dbReference type="GO" id="GO:0071555">
    <property type="term" value="P:cell wall organization"/>
    <property type="evidence" value="ECO:0007669"/>
    <property type="project" value="UniProtKB-KW"/>
</dbReference>
<dbReference type="GO" id="GO:0009252">
    <property type="term" value="P:peptidoglycan biosynthetic process"/>
    <property type="evidence" value="ECO:0007669"/>
    <property type="project" value="UniProtKB-UniRule"/>
</dbReference>
<dbReference type="GO" id="GO:0008360">
    <property type="term" value="P:regulation of cell shape"/>
    <property type="evidence" value="ECO:0007669"/>
    <property type="project" value="UniProtKB-KW"/>
</dbReference>
<dbReference type="Gene3D" id="3.90.190.20">
    <property type="entry name" value="Mur ligase, C-terminal domain"/>
    <property type="match status" value="1"/>
</dbReference>
<dbReference type="Gene3D" id="3.40.1190.10">
    <property type="entry name" value="Mur-like, catalytic domain"/>
    <property type="match status" value="1"/>
</dbReference>
<dbReference type="Gene3D" id="3.40.1390.10">
    <property type="entry name" value="MurE/MurF, N-terminal domain"/>
    <property type="match status" value="1"/>
</dbReference>
<dbReference type="HAMAP" id="MF_00208">
    <property type="entry name" value="MurE"/>
    <property type="match status" value="1"/>
</dbReference>
<dbReference type="InterPro" id="IPR036565">
    <property type="entry name" value="Mur-like_cat_sf"/>
</dbReference>
<dbReference type="InterPro" id="IPR004101">
    <property type="entry name" value="Mur_ligase_C"/>
</dbReference>
<dbReference type="InterPro" id="IPR036615">
    <property type="entry name" value="Mur_ligase_C_dom_sf"/>
</dbReference>
<dbReference type="InterPro" id="IPR013221">
    <property type="entry name" value="Mur_ligase_cen"/>
</dbReference>
<dbReference type="InterPro" id="IPR035911">
    <property type="entry name" value="MurE/MurF_N"/>
</dbReference>
<dbReference type="InterPro" id="IPR005761">
    <property type="entry name" value="UDP-N-AcMur-Glu-dNH2Pim_ligase"/>
</dbReference>
<dbReference type="NCBIfam" id="TIGR01085">
    <property type="entry name" value="murE"/>
    <property type="match status" value="1"/>
</dbReference>
<dbReference type="NCBIfam" id="NF001126">
    <property type="entry name" value="PRK00139.1-4"/>
    <property type="match status" value="1"/>
</dbReference>
<dbReference type="PANTHER" id="PTHR23135">
    <property type="entry name" value="MUR LIGASE FAMILY MEMBER"/>
    <property type="match status" value="1"/>
</dbReference>
<dbReference type="PANTHER" id="PTHR23135:SF4">
    <property type="entry name" value="UDP-N-ACETYLMURAMOYL-L-ALANYL-D-GLUTAMATE--2,6-DIAMINOPIMELATE LIGASE MURE HOMOLOG, CHLOROPLASTIC"/>
    <property type="match status" value="1"/>
</dbReference>
<dbReference type="Pfam" id="PF02875">
    <property type="entry name" value="Mur_ligase_C"/>
    <property type="match status" value="1"/>
</dbReference>
<dbReference type="Pfam" id="PF08245">
    <property type="entry name" value="Mur_ligase_M"/>
    <property type="match status" value="1"/>
</dbReference>
<dbReference type="SUPFAM" id="SSF53623">
    <property type="entry name" value="MurD-like peptide ligases, catalytic domain"/>
    <property type="match status" value="1"/>
</dbReference>
<dbReference type="SUPFAM" id="SSF53244">
    <property type="entry name" value="MurD-like peptide ligases, peptide-binding domain"/>
    <property type="match status" value="1"/>
</dbReference>
<dbReference type="SUPFAM" id="SSF63418">
    <property type="entry name" value="MurE/MurF N-terminal domain"/>
    <property type="match status" value="1"/>
</dbReference>
<reference key="1">
    <citation type="journal article" date="2003" name="Proc. Natl. Acad. Sci. U.S.A.">
        <title>Reductive genome evolution in Buchnera aphidicola.</title>
        <authorList>
            <person name="van Ham R.C.H.J."/>
            <person name="Kamerbeek J."/>
            <person name="Palacios C."/>
            <person name="Rausell C."/>
            <person name="Abascal F."/>
            <person name="Bastolla U."/>
            <person name="Fernandez J.M."/>
            <person name="Jimenez L."/>
            <person name="Postigo M."/>
            <person name="Silva F.J."/>
            <person name="Tamames J."/>
            <person name="Viguera E."/>
            <person name="Latorre A."/>
            <person name="Valencia A."/>
            <person name="Moran F."/>
            <person name="Moya A."/>
        </authorList>
    </citation>
    <scope>NUCLEOTIDE SEQUENCE [LARGE SCALE GENOMIC DNA]</scope>
    <source>
        <strain>Bp</strain>
    </source>
</reference>
<sequence length="508" mass="58577">MTILIKNNNLQQLLSSWIKLSYSYTISGIQSDSRLVKPGYLFCVLKKKNINETNKHMIHAIKNGAKIILYDTKQKFKNGTLKKIINHVPIIYFFKLSKNLPQILKKYYHFENNFTLIGITGTNGKSTTTHIVSQWANLLNVKIGIMGTLGHGINNNLKKTDNTTESSANIHQFLYHMLKQNIKTFAIEISSHGIVQHRIEQLPFKIAILTNITPEHLDYHRTMDNYINAKKAFFFKYNINTLIINADDLIAKTWIKKLNHKNVITITTKDQNFNSISPKKWIHANKIIQKQNCTNIHFNSSWGHGILNSTLIGHFNVINILLALATLLELNYPITDLVKVCKYIKTISGRMEHIHIVNKPKVIIDYAHNTNGLKNLLSTLKEIFNKKKIWCIFGCGGDRDKTKRPYMGSIAEKMSDQVILTNDNPRNEHPLKIIKNILSGCKFKNKIRIIPNREHAIKFAVNNADKEDIIVVAGKGHEKYQIINNKYYHFSDHKIIKKLLNKKNYDFN</sequence>